<evidence type="ECO:0000255" key="1">
    <source>
        <dbReference type="HAMAP-Rule" id="MF_01346"/>
    </source>
</evidence>
<comment type="function">
    <text evidence="1">Produces ATP from ADP in the presence of a proton gradient across the membrane. The alpha chain is a regulatory subunit.</text>
</comment>
<comment type="catalytic activity">
    <reaction evidence="1">
        <text>ATP + H2O + 4 H(+)(in) = ADP + phosphate + 5 H(+)(out)</text>
        <dbReference type="Rhea" id="RHEA:57720"/>
        <dbReference type="ChEBI" id="CHEBI:15377"/>
        <dbReference type="ChEBI" id="CHEBI:15378"/>
        <dbReference type="ChEBI" id="CHEBI:30616"/>
        <dbReference type="ChEBI" id="CHEBI:43474"/>
        <dbReference type="ChEBI" id="CHEBI:456216"/>
        <dbReference type="EC" id="7.1.2.2"/>
    </reaction>
</comment>
<comment type="subunit">
    <text evidence="1">F-type ATPases have 2 components, CF(1) - the catalytic core - and CF(0) - the membrane proton channel. CF(1) has five subunits: alpha(3), beta(3), gamma(1), delta(1), epsilon(1). CF(0) has three main subunits: a(1), b(2) and c(9-12). The alpha and beta chains form an alternating ring which encloses part of the gamma chain. CF(1) is attached to CF(0) by a central stalk formed by the gamma and epsilon chains, while a peripheral stalk is formed by the delta and b chains.</text>
</comment>
<comment type="subcellular location">
    <subcellularLocation>
        <location evidence="1">Cell membrane</location>
        <topology evidence="1">Peripheral membrane protein</topology>
    </subcellularLocation>
</comment>
<comment type="similarity">
    <text evidence="1">Belongs to the ATPase alpha/beta chains family.</text>
</comment>
<dbReference type="EC" id="7.1.2.2" evidence="1"/>
<dbReference type="EMBL" id="CP001034">
    <property type="protein sequence ID" value="ACB86393.1"/>
    <property type="molecule type" value="Genomic_DNA"/>
</dbReference>
<dbReference type="RefSeq" id="WP_012449225.1">
    <property type="nucleotide sequence ID" value="NC_010718.1"/>
</dbReference>
<dbReference type="SMR" id="B2A3G4"/>
<dbReference type="FunCoup" id="B2A3G4">
    <property type="interactions" value="362"/>
</dbReference>
<dbReference type="STRING" id="457570.Nther_2846"/>
<dbReference type="KEGG" id="nth:Nther_2846"/>
<dbReference type="eggNOG" id="COG0056">
    <property type="taxonomic scope" value="Bacteria"/>
</dbReference>
<dbReference type="HOGENOM" id="CLU_010091_2_1_9"/>
<dbReference type="InParanoid" id="B2A3G4"/>
<dbReference type="OrthoDB" id="9803053at2"/>
<dbReference type="Proteomes" id="UP000001683">
    <property type="component" value="Chromosome"/>
</dbReference>
<dbReference type="GO" id="GO:0005886">
    <property type="term" value="C:plasma membrane"/>
    <property type="evidence" value="ECO:0007669"/>
    <property type="project" value="UniProtKB-SubCell"/>
</dbReference>
<dbReference type="GO" id="GO:0045259">
    <property type="term" value="C:proton-transporting ATP synthase complex"/>
    <property type="evidence" value="ECO:0007669"/>
    <property type="project" value="UniProtKB-KW"/>
</dbReference>
<dbReference type="GO" id="GO:0043531">
    <property type="term" value="F:ADP binding"/>
    <property type="evidence" value="ECO:0007669"/>
    <property type="project" value="TreeGrafter"/>
</dbReference>
<dbReference type="GO" id="GO:0005524">
    <property type="term" value="F:ATP binding"/>
    <property type="evidence" value="ECO:0007669"/>
    <property type="project" value="UniProtKB-UniRule"/>
</dbReference>
<dbReference type="GO" id="GO:0046933">
    <property type="term" value="F:proton-transporting ATP synthase activity, rotational mechanism"/>
    <property type="evidence" value="ECO:0007669"/>
    <property type="project" value="UniProtKB-UniRule"/>
</dbReference>
<dbReference type="CDD" id="cd18113">
    <property type="entry name" value="ATP-synt_F1_alpha_C"/>
    <property type="match status" value="1"/>
</dbReference>
<dbReference type="CDD" id="cd18116">
    <property type="entry name" value="ATP-synt_F1_alpha_N"/>
    <property type="match status" value="1"/>
</dbReference>
<dbReference type="CDD" id="cd01132">
    <property type="entry name" value="F1-ATPase_alpha_CD"/>
    <property type="match status" value="1"/>
</dbReference>
<dbReference type="FunFam" id="1.20.150.20:FF:000001">
    <property type="entry name" value="ATP synthase subunit alpha"/>
    <property type="match status" value="1"/>
</dbReference>
<dbReference type="FunFam" id="2.40.30.20:FF:000001">
    <property type="entry name" value="ATP synthase subunit alpha"/>
    <property type="match status" value="1"/>
</dbReference>
<dbReference type="FunFam" id="3.40.50.300:FF:000002">
    <property type="entry name" value="ATP synthase subunit alpha"/>
    <property type="match status" value="1"/>
</dbReference>
<dbReference type="Gene3D" id="2.40.30.20">
    <property type="match status" value="1"/>
</dbReference>
<dbReference type="Gene3D" id="1.20.150.20">
    <property type="entry name" value="ATP synthase alpha/beta chain, C-terminal domain"/>
    <property type="match status" value="1"/>
</dbReference>
<dbReference type="Gene3D" id="3.40.50.300">
    <property type="entry name" value="P-loop containing nucleotide triphosphate hydrolases"/>
    <property type="match status" value="1"/>
</dbReference>
<dbReference type="HAMAP" id="MF_01346">
    <property type="entry name" value="ATP_synth_alpha_bact"/>
    <property type="match status" value="1"/>
</dbReference>
<dbReference type="InterPro" id="IPR023366">
    <property type="entry name" value="ATP_synth_asu-like_sf"/>
</dbReference>
<dbReference type="InterPro" id="IPR000793">
    <property type="entry name" value="ATP_synth_asu_C"/>
</dbReference>
<dbReference type="InterPro" id="IPR038376">
    <property type="entry name" value="ATP_synth_asu_C_sf"/>
</dbReference>
<dbReference type="InterPro" id="IPR033732">
    <property type="entry name" value="ATP_synth_F1_a_nt-bd_dom"/>
</dbReference>
<dbReference type="InterPro" id="IPR005294">
    <property type="entry name" value="ATP_synth_F1_asu"/>
</dbReference>
<dbReference type="InterPro" id="IPR020003">
    <property type="entry name" value="ATPase_a/bsu_AS"/>
</dbReference>
<dbReference type="InterPro" id="IPR004100">
    <property type="entry name" value="ATPase_F1/V1/A1_a/bsu_N"/>
</dbReference>
<dbReference type="InterPro" id="IPR036121">
    <property type="entry name" value="ATPase_F1/V1/A1_a/bsu_N_sf"/>
</dbReference>
<dbReference type="InterPro" id="IPR000194">
    <property type="entry name" value="ATPase_F1/V1/A1_a/bsu_nucl-bd"/>
</dbReference>
<dbReference type="InterPro" id="IPR027417">
    <property type="entry name" value="P-loop_NTPase"/>
</dbReference>
<dbReference type="NCBIfam" id="TIGR00962">
    <property type="entry name" value="atpA"/>
    <property type="match status" value="1"/>
</dbReference>
<dbReference type="NCBIfam" id="NF009884">
    <property type="entry name" value="PRK13343.1"/>
    <property type="match status" value="1"/>
</dbReference>
<dbReference type="PANTHER" id="PTHR48082">
    <property type="entry name" value="ATP SYNTHASE SUBUNIT ALPHA, MITOCHONDRIAL"/>
    <property type="match status" value="1"/>
</dbReference>
<dbReference type="PANTHER" id="PTHR48082:SF2">
    <property type="entry name" value="ATP SYNTHASE SUBUNIT ALPHA, MITOCHONDRIAL"/>
    <property type="match status" value="1"/>
</dbReference>
<dbReference type="Pfam" id="PF00006">
    <property type="entry name" value="ATP-synt_ab"/>
    <property type="match status" value="1"/>
</dbReference>
<dbReference type="Pfam" id="PF00306">
    <property type="entry name" value="ATP-synt_ab_C"/>
    <property type="match status" value="1"/>
</dbReference>
<dbReference type="Pfam" id="PF02874">
    <property type="entry name" value="ATP-synt_ab_N"/>
    <property type="match status" value="1"/>
</dbReference>
<dbReference type="PIRSF" id="PIRSF039088">
    <property type="entry name" value="F_ATPase_subunit_alpha"/>
    <property type="match status" value="1"/>
</dbReference>
<dbReference type="SUPFAM" id="SSF47917">
    <property type="entry name" value="C-terminal domain of alpha and beta subunits of F1 ATP synthase"/>
    <property type="match status" value="1"/>
</dbReference>
<dbReference type="SUPFAM" id="SSF50615">
    <property type="entry name" value="N-terminal domain of alpha and beta subunits of F1 ATP synthase"/>
    <property type="match status" value="1"/>
</dbReference>
<dbReference type="SUPFAM" id="SSF52540">
    <property type="entry name" value="P-loop containing nucleoside triphosphate hydrolases"/>
    <property type="match status" value="1"/>
</dbReference>
<dbReference type="PROSITE" id="PS00152">
    <property type="entry name" value="ATPASE_ALPHA_BETA"/>
    <property type="match status" value="1"/>
</dbReference>
<sequence>MSIRPDEISTVLKDKIANYESQVDVYEVGTVLYIGDGIARVHGLENVMANELVEFPGEIYGMALNLEEDNVGCVLLGEYSHIKEGDQVKRTGRIIEVPVGDDLVGRVVNPVGEPRDGKGPIEATDFRPVETRAPGVIDRKPVEEPLQTGLKAIDSMIPIGRGQRELIIGDRGTGKSAIGIDTILNQKDSDVYCIYVAIGQKKSTVAQVVDVLERHGAMDYTTVVAATADEPAPLLYLAPYAGCSMGEKFMHEGKHVLVVYDDLSKHAASYRELSLLLRRPPGREAYPGDIFYLHSRLLERAAKLNDENGGGSLTALPIIETQAGDVSAYIPTNVISITDGQIYLISDLFHAGQRPAVDVGISVSRVGGSAQLKGMKQVSGTLRLDLAQYRELEAFAQFGTDLDKSTQQKLARGKRTFEILKQDQYQPMPVADQIVIIFCATHGLLDDLEVEQIKEFEKFLLSYVKDNEPGIYQQVETGEKISDELEDQLKEVINKAKEQFKEEKELTG</sequence>
<feature type="chain" id="PRO_1000143414" description="ATP synthase subunit alpha">
    <location>
        <begin position="1"/>
        <end position="508"/>
    </location>
</feature>
<feature type="binding site" evidence="1">
    <location>
        <begin position="169"/>
        <end position="176"/>
    </location>
    <ligand>
        <name>ATP</name>
        <dbReference type="ChEBI" id="CHEBI:30616"/>
    </ligand>
</feature>
<feature type="site" description="Required for activity" evidence="1">
    <location>
        <position position="362"/>
    </location>
</feature>
<accession>B2A3G4</accession>
<keyword id="KW-0066">ATP synthesis</keyword>
<keyword id="KW-0067">ATP-binding</keyword>
<keyword id="KW-1003">Cell membrane</keyword>
<keyword id="KW-0139">CF(1)</keyword>
<keyword id="KW-0375">Hydrogen ion transport</keyword>
<keyword id="KW-0406">Ion transport</keyword>
<keyword id="KW-0472">Membrane</keyword>
<keyword id="KW-0547">Nucleotide-binding</keyword>
<keyword id="KW-1185">Reference proteome</keyword>
<keyword id="KW-1278">Translocase</keyword>
<keyword id="KW-0813">Transport</keyword>
<proteinExistence type="inferred from homology"/>
<protein>
    <recommendedName>
        <fullName evidence="1">ATP synthase subunit alpha</fullName>
        <ecNumber evidence="1">7.1.2.2</ecNumber>
    </recommendedName>
    <alternativeName>
        <fullName evidence="1">ATP synthase F1 sector subunit alpha</fullName>
    </alternativeName>
    <alternativeName>
        <fullName evidence="1">F-ATPase subunit alpha</fullName>
    </alternativeName>
</protein>
<reference key="1">
    <citation type="submission" date="2008-04" db="EMBL/GenBank/DDBJ databases">
        <title>Complete sequence of chromosome of Natranaerobius thermophilus JW/NM-WN-LF.</title>
        <authorList>
            <consortium name="US DOE Joint Genome Institute"/>
            <person name="Copeland A."/>
            <person name="Lucas S."/>
            <person name="Lapidus A."/>
            <person name="Glavina del Rio T."/>
            <person name="Dalin E."/>
            <person name="Tice H."/>
            <person name="Bruce D."/>
            <person name="Goodwin L."/>
            <person name="Pitluck S."/>
            <person name="Chertkov O."/>
            <person name="Brettin T."/>
            <person name="Detter J.C."/>
            <person name="Han C."/>
            <person name="Kuske C.R."/>
            <person name="Schmutz J."/>
            <person name="Larimer F."/>
            <person name="Land M."/>
            <person name="Hauser L."/>
            <person name="Kyrpides N."/>
            <person name="Lykidis A."/>
            <person name="Mesbah N.M."/>
            <person name="Wiegel J."/>
        </authorList>
    </citation>
    <scope>NUCLEOTIDE SEQUENCE [LARGE SCALE GENOMIC DNA]</scope>
    <source>
        <strain>ATCC BAA-1301 / DSM 18059 / JW/NM-WN-LF</strain>
    </source>
</reference>
<organism>
    <name type="scientific">Natranaerobius thermophilus (strain ATCC BAA-1301 / DSM 18059 / JW/NM-WN-LF)</name>
    <dbReference type="NCBI Taxonomy" id="457570"/>
    <lineage>
        <taxon>Bacteria</taxon>
        <taxon>Bacillati</taxon>
        <taxon>Bacillota</taxon>
        <taxon>Clostridia</taxon>
        <taxon>Natranaerobiales</taxon>
        <taxon>Natranaerobiaceae</taxon>
        <taxon>Natranaerobius</taxon>
    </lineage>
</organism>
<name>ATPA_NATTJ</name>
<gene>
    <name evidence="1" type="primary">atpA</name>
    <name type="ordered locus">Nther_2846</name>
</gene>